<dbReference type="EC" id="3.5.2.9" evidence="1"/>
<dbReference type="EMBL" id="CP000964">
    <property type="protein sequence ID" value="ACI08248.1"/>
    <property type="molecule type" value="Genomic_DNA"/>
</dbReference>
<dbReference type="SMR" id="B5XZE1"/>
<dbReference type="KEGG" id="kpe:KPK_3846"/>
<dbReference type="HOGENOM" id="CLU_069535_0_0_6"/>
<dbReference type="BioCyc" id="KPNE507522:GI0B-3828-MONOMER"/>
<dbReference type="Proteomes" id="UP000001734">
    <property type="component" value="Chromosome"/>
</dbReference>
<dbReference type="GO" id="GO:0017168">
    <property type="term" value="F:5-oxoprolinase (ATP-hydrolyzing) activity"/>
    <property type="evidence" value="ECO:0007669"/>
    <property type="project" value="UniProtKB-UniRule"/>
</dbReference>
<dbReference type="GO" id="GO:0005524">
    <property type="term" value="F:ATP binding"/>
    <property type="evidence" value="ECO:0007669"/>
    <property type="project" value="UniProtKB-UniRule"/>
</dbReference>
<dbReference type="GO" id="GO:0005975">
    <property type="term" value="P:carbohydrate metabolic process"/>
    <property type="evidence" value="ECO:0007669"/>
    <property type="project" value="InterPro"/>
</dbReference>
<dbReference type="CDD" id="cd10800">
    <property type="entry name" value="LamB_YcsF_YbgL_like"/>
    <property type="match status" value="1"/>
</dbReference>
<dbReference type="Gene3D" id="3.20.20.370">
    <property type="entry name" value="Glycoside hydrolase/deacetylase"/>
    <property type="match status" value="1"/>
</dbReference>
<dbReference type="HAMAP" id="MF_00691">
    <property type="entry name" value="PxpA"/>
    <property type="match status" value="1"/>
</dbReference>
<dbReference type="InterPro" id="IPR011330">
    <property type="entry name" value="Glyco_hydro/deAcase_b/a-brl"/>
</dbReference>
<dbReference type="InterPro" id="IPR005501">
    <property type="entry name" value="LamB/YcsF/PxpA-like"/>
</dbReference>
<dbReference type="NCBIfam" id="NF003812">
    <property type="entry name" value="PRK05406.1-1"/>
    <property type="match status" value="1"/>
</dbReference>
<dbReference type="NCBIfam" id="NF003814">
    <property type="entry name" value="PRK05406.1-3"/>
    <property type="match status" value="1"/>
</dbReference>
<dbReference type="NCBIfam" id="NF003815">
    <property type="entry name" value="PRK05406.1-4"/>
    <property type="match status" value="1"/>
</dbReference>
<dbReference type="NCBIfam" id="NF003816">
    <property type="entry name" value="PRK05406.1-5"/>
    <property type="match status" value="1"/>
</dbReference>
<dbReference type="PANTHER" id="PTHR30292:SF0">
    <property type="entry name" value="5-OXOPROLINASE SUBUNIT A"/>
    <property type="match status" value="1"/>
</dbReference>
<dbReference type="PANTHER" id="PTHR30292">
    <property type="entry name" value="UNCHARACTERIZED PROTEIN YBGL-RELATED"/>
    <property type="match status" value="1"/>
</dbReference>
<dbReference type="Pfam" id="PF03746">
    <property type="entry name" value="LamB_YcsF"/>
    <property type="match status" value="1"/>
</dbReference>
<dbReference type="SUPFAM" id="SSF88713">
    <property type="entry name" value="Glycoside hydrolase/deacetylase"/>
    <property type="match status" value="1"/>
</dbReference>
<protein>
    <recommendedName>
        <fullName evidence="1">5-oxoprolinase subunit A</fullName>
        <shortName evidence="1">5-OPase subunit A</shortName>
        <ecNumber evidence="1">3.5.2.9</ecNumber>
    </recommendedName>
    <alternativeName>
        <fullName evidence="1">5-oxoprolinase (ATP-hydrolyzing) subunit A</fullName>
    </alternativeName>
</protein>
<feature type="chain" id="PRO_1000132062" description="5-oxoprolinase subunit A">
    <location>
        <begin position="1"/>
        <end position="250"/>
    </location>
</feature>
<reference key="1">
    <citation type="journal article" date="2008" name="PLoS Genet.">
        <title>Complete genome sequence of the N2-fixing broad host range endophyte Klebsiella pneumoniae 342 and virulence predictions verified in mice.</title>
        <authorList>
            <person name="Fouts D.E."/>
            <person name="Tyler H.L."/>
            <person name="DeBoy R.T."/>
            <person name="Daugherty S."/>
            <person name="Ren Q."/>
            <person name="Badger J.H."/>
            <person name="Durkin A.S."/>
            <person name="Huot H."/>
            <person name="Shrivastava S."/>
            <person name="Kothari S."/>
            <person name="Dodson R.J."/>
            <person name="Mohamoud Y."/>
            <person name="Khouri H."/>
            <person name="Roesch L.F.W."/>
            <person name="Krogfelt K.A."/>
            <person name="Struve C."/>
            <person name="Triplett E.W."/>
            <person name="Methe B.A."/>
        </authorList>
    </citation>
    <scope>NUCLEOTIDE SEQUENCE [LARGE SCALE GENOMIC DNA]</scope>
    <source>
        <strain>342</strain>
    </source>
</reference>
<name>PXPA_KLEP3</name>
<comment type="function">
    <text evidence="1">Catalyzes the cleavage of 5-oxoproline to form L-glutamate coupled to the hydrolysis of ATP to ADP and inorganic phosphate.</text>
</comment>
<comment type="catalytic activity">
    <reaction evidence="1">
        <text>5-oxo-L-proline + ATP + 2 H2O = L-glutamate + ADP + phosphate + H(+)</text>
        <dbReference type="Rhea" id="RHEA:10348"/>
        <dbReference type="ChEBI" id="CHEBI:15377"/>
        <dbReference type="ChEBI" id="CHEBI:15378"/>
        <dbReference type="ChEBI" id="CHEBI:29985"/>
        <dbReference type="ChEBI" id="CHEBI:30616"/>
        <dbReference type="ChEBI" id="CHEBI:43474"/>
        <dbReference type="ChEBI" id="CHEBI:58402"/>
        <dbReference type="ChEBI" id="CHEBI:456216"/>
        <dbReference type="EC" id="3.5.2.9"/>
    </reaction>
</comment>
<comment type="subunit">
    <text evidence="1">Forms a complex composed of PxpA, PxpB and PxpC.</text>
</comment>
<comment type="similarity">
    <text evidence="1">Belongs to the LamB/PxpA family.</text>
</comment>
<organism>
    <name type="scientific">Klebsiella pneumoniae (strain 342)</name>
    <dbReference type="NCBI Taxonomy" id="507522"/>
    <lineage>
        <taxon>Bacteria</taxon>
        <taxon>Pseudomonadati</taxon>
        <taxon>Pseudomonadota</taxon>
        <taxon>Gammaproteobacteria</taxon>
        <taxon>Enterobacterales</taxon>
        <taxon>Enterobacteriaceae</taxon>
        <taxon>Klebsiella/Raoultella group</taxon>
        <taxon>Klebsiella</taxon>
        <taxon>Klebsiella pneumoniae complex</taxon>
    </lineage>
</organism>
<accession>B5XZE1</accession>
<proteinExistence type="inferred from homology"/>
<sequence length="250" mass="26545">MMIDLNADLGEGGANDSALLQLVSSANIACGFHAGDAGLMVQSVREALKYGVAVGAHPGYPDRENFGRTAMDLPPETVYAQMLYQIGALAAIVQAQGGELQHVKPHGMLYNQAAKSPPLADAIARAIRDVNPKLVLVGLAGSELIRAGQHYGLTTRQEVFADRGYLADGSLVPRSQPGALIDSEEQALAQTLEMVQHHRVRSISGEWANVVAQTVCLHGDGPHALDFARRLRAAFAGRHILVSAQLDAEA</sequence>
<evidence type="ECO:0000255" key="1">
    <source>
        <dbReference type="HAMAP-Rule" id="MF_00691"/>
    </source>
</evidence>
<gene>
    <name evidence="1" type="primary">pxpA</name>
    <name type="ordered locus">KPK_3846</name>
</gene>
<keyword id="KW-0067">ATP-binding</keyword>
<keyword id="KW-0378">Hydrolase</keyword>
<keyword id="KW-0547">Nucleotide-binding</keyword>